<keyword id="KW-0067">ATP-binding</keyword>
<keyword id="KW-0963">Cytoplasm</keyword>
<keyword id="KW-0217">Developmental protein</keyword>
<keyword id="KW-0460">Magnesium</keyword>
<keyword id="KW-0464">Manganese</keyword>
<keyword id="KW-0469">Meiosis</keyword>
<keyword id="KW-0479">Metal-binding</keyword>
<keyword id="KW-0507">mRNA processing</keyword>
<keyword id="KW-0547">Nucleotide-binding</keyword>
<keyword id="KW-1185">Reference proteome</keyword>
<keyword id="KW-0808">Transferase</keyword>
<dbReference type="EC" id="2.7.7.19" evidence="4"/>
<dbReference type="EMBL" id="FJ610054">
    <property type="protein sequence ID" value="ACO95123.1"/>
    <property type="molecule type" value="mRNA"/>
</dbReference>
<dbReference type="EMBL" id="Z79759">
    <property type="protein sequence ID" value="CAB02138.3"/>
    <property type="molecule type" value="Genomic_DNA"/>
</dbReference>
<dbReference type="RefSeq" id="NP_492446.3">
    <property type="nucleotide sequence ID" value="NM_060045.7"/>
</dbReference>
<dbReference type="SMR" id="G5EFL0"/>
<dbReference type="BioGRID" id="38166">
    <property type="interactions" value="2"/>
</dbReference>
<dbReference type="FunCoup" id="G5EFL0">
    <property type="interactions" value="146"/>
</dbReference>
<dbReference type="IntAct" id="G5EFL0">
    <property type="interactions" value="1"/>
</dbReference>
<dbReference type="STRING" id="6239.ZK858.1.1"/>
<dbReference type="PaxDb" id="6239-ZK858.1"/>
<dbReference type="PeptideAtlas" id="G5EFL0"/>
<dbReference type="EnsemblMetazoa" id="ZK858.1.1">
    <property type="protein sequence ID" value="ZK858.1.1"/>
    <property type="gene ID" value="WBGene00014115"/>
</dbReference>
<dbReference type="GeneID" id="172735"/>
<dbReference type="KEGG" id="cel:CELE_ZK858.1"/>
<dbReference type="AGR" id="WB:WBGene00014115"/>
<dbReference type="CTD" id="172735"/>
<dbReference type="WormBase" id="ZK858.1">
    <property type="protein sequence ID" value="CE42850"/>
    <property type="gene ID" value="WBGene00014115"/>
    <property type="gene designation" value="gld-4"/>
</dbReference>
<dbReference type="eggNOG" id="KOG1906">
    <property type="taxonomic scope" value="Eukaryota"/>
</dbReference>
<dbReference type="GeneTree" id="ENSGT00940000169468"/>
<dbReference type="HOGENOM" id="CLU_320096_0_0_1"/>
<dbReference type="InParanoid" id="G5EFL0"/>
<dbReference type="OMA" id="PGQCCYI"/>
<dbReference type="OrthoDB" id="273917at2759"/>
<dbReference type="CD-CODE" id="73A75392">
    <property type="entry name" value="P-granule"/>
</dbReference>
<dbReference type="PRO" id="PR:G5EFL0"/>
<dbReference type="Proteomes" id="UP000001940">
    <property type="component" value="Chromosome I"/>
</dbReference>
<dbReference type="Bgee" id="WBGene00014115">
    <property type="expression patterns" value="Expressed in adult organism and 4 other cell types or tissues"/>
</dbReference>
<dbReference type="GO" id="GO:0005737">
    <property type="term" value="C:cytoplasm"/>
    <property type="evidence" value="ECO:0000314"/>
    <property type="project" value="WormBase"/>
</dbReference>
<dbReference type="GO" id="GO:0005730">
    <property type="term" value="C:nucleolus"/>
    <property type="evidence" value="ECO:0000318"/>
    <property type="project" value="GO_Central"/>
</dbReference>
<dbReference type="GO" id="GO:0043186">
    <property type="term" value="C:P granule"/>
    <property type="evidence" value="ECO:0000314"/>
    <property type="project" value="WormBase"/>
</dbReference>
<dbReference type="GO" id="GO:0048471">
    <property type="term" value="C:perinuclear region of cytoplasm"/>
    <property type="evidence" value="ECO:0007669"/>
    <property type="project" value="UniProtKB-SubCell"/>
</dbReference>
<dbReference type="GO" id="GO:0031499">
    <property type="term" value="C:TRAMP complex"/>
    <property type="evidence" value="ECO:0000318"/>
    <property type="project" value="GO_Central"/>
</dbReference>
<dbReference type="GO" id="GO:0005524">
    <property type="term" value="F:ATP binding"/>
    <property type="evidence" value="ECO:0007669"/>
    <property type="project" value="UniProtKB-KW"/>
</dbReference>
<dbReference type="GO" id="GO:0046872">
    <property type="term" value="F:metal ion binding"/>
    <property type="evidence" value="ECO:0007669"/>
    <property type="project" value="UniProtKB-KW"/>
</dbReference>
<dbReference type="GO" id="GO:1990817">
    <property type="term" value="F:poly(A) RNA polymerase activity"/>
    <property type="evidence" value="ECO:0000314"/>
    <property type="project" value="WormBase"/>
</dbReference>
<dbReference type="GO" id="GO:0180011">
    <property type="term" value="P:cytosolic mRNA polyadenylation"/>
    <property type="evidence" value="ECO:0000314"/>
    <property type="project" value="WormBase"/>
</dbReference>
<dbReference type="GO" id="GO:0051321">
    <property type="term" value="P:meiotic cell cycle"/>
    <property type="evidence" value="ECO:0007669"/>
    <property type="project" value="UniProtKB-KW"/>
</dbReference>
<dbReference type="GO" id="GO:0006397">
    <property type="term" value="P:mRNA processing"/>
    <property type="evidence" value="ECO:0007669"/>
    <property type="project" value="UniProtKB-KW"/>
</dbReference>
<dbReference type="GO" id="GO:0043634">
    <property type="term" value="P:polyadenylation-dependent ncRNA catabolic process"/>
    <property type="evidence" value="ECO:0000318"/>
    <property type="project" value="GO_Central"/>
</dbReference>
<dbReference type="GO" id="GO:0051446">
    <property type="term" value="P:positive regulation of meiotic cell cycle"/>
    <property type="evidence" value="ECO:0000315"/>
    <property type="project" value="WormBase"/>
</dbReference>
<dbReference type="GO" id="GO:0031123">
    <property type="term" value="P:RNA 3'-end processing"/>
    <property type="evidence" value="ECO:0000318"/>
    <property type="project" value="GO_Central"/>
</dbReference>
<dbReference type="CDD" id="cd05402">
    <property type="entry name" value="NT_PAP_TUTase"/>
    <property type="match status" value="1"/>
</dbReference>
<dbReference type="FunFam" id="3.30.460.10:FF:000038">
    <property type="entry name" value="Topoisomerase-related function protein-like protein"/>
    <property type="match status" value="1"/>
</dbReference>
<dbReference type="Gene3D" id="1.10.1410.10">
    <property type="match status" value="1"/>
</dbReference>
<dbReference type="Gene3D" id="3.30.460.10">
    <property type="entry name" value="Beta Polymerase, domain 2"/>
    <property type="match status" value="1"/>
</dbReference>
<dbReference type="InterPro" id="IPR054708">
    <property type="entry name" value="MTPAP-like_central"/>
</dbReference>
<dbReference type="InterPro" id="IPR043519">
    <property type="entry name" value="NT_sf"/>
</dbReference>
<dbReference type="InterPro" id="IPR002058">
    <property type="entry name" value="PAP_assoc"/>
</dbReference>
<dbReference type="InterPro" id="IPR045862">
    <property type="entry name" value="Trf4-like"/>
</dbReference>
<dbReference type="PANTHER" id="PTHR23092:SF15">
    <property type="entry name" value="INACTIVE NON-CANONICAL POLY(A) RNA POLYMERASE PROTEIN TRF4-2-RELATED"/>
    <property type="match status" value="1"/>
</dbReference>
<dbReference type="PANTHER" id="PTHR23092">
    <property type="entry name" value="POLY(A) RNA POLYMERASE"/>
    <property type="match status" value="1"/>
</dbReference>
<dbReference type="Pfam" id="PF22600">
    <property type="entry name" value="MTPAP-like_central"/>
    <property type="match status" value="1"/>
</dbReference>
<dbReference type="Pfam" id="PF03828">
    <property type="entry name" value="PAP_assoc"/>
    <property type="match status" value="1"/>
</dbReference>
<dbReference type="SUPFAM" id="SSF81301">
    <property type="entry name" value="Nucleotidyltransferase"/>
    <property type="match status" value="1"/>
</dbReference>
<dbReference type="SUPFAM" id="SSF81631">
    <property type="entry name" value="PAP/OAS1 substrate-binding domain"/>
    <property type="match status" value="1"/>
</dbReference>
<comment type="function">
    <text evidence="4">Cytoplasmic poly(A) RNA polymerase that adds successive AMP monomers to the 3'-end of specific RNAs, forming a poly(A) tail. The enzymatic activity is enhanced by its interaction with gls-1. Required, together with gld-2, for early meiotic progression in male and female germ cells and for gld-1 protein accumulation in the hermaphrodite germline. In the germline, forms a complex with gls-1 which directly binds to gld-1 mRNA and prevents its degradation.</text>
</comment>
<comment type="catalytic activity">
    <reaction evidence="4">
        <text>RNA(n) + ATP = RNA(n)-3'-adenine ribonucleotide + diphosphate</text>
        <dbReference type="Rhea" id="RHEA:11332"/>
        <dbReference type="Rhea" id="RHEA-COMP:14527"/>
        <dbReference type="Rhea" id="RHEA-COMP:17347"/>
        <dbReference type="ChEBI" id="CHEBI:30616"/>
        <dbReference type="ChEBI" id="CHEBI:33019"/>
        <dbReference type="ChEBI" id="CHEBI:140395"/>
        <dbReference type="ChEBI" id="CHEBI:173115"/>
        <dbReference type="EC" id="2.7.7.19"/>
    </reaction>
</comment>
<comment type="cofactor">
    <cofactor evidence="1">
        <name>Mg(2+)</name>
        <dbReference type="ChEBI" id="CHEBI:18420"/>
    </cofactor>
    <cofactor evidence="1">
        <name>Mn(2+)</name>
        <dbReference type="ChEBI" id="CHEBI:29035"/>
    </cofactor>
</comment>
<comment type="subunit">
    <text evidence="4">Interacts with gls-1 isoform C.</text>
</comment>
<comment type="subcellular location">
    <subcellularLocation>
        <location evidence="4">Cytoplasm</location>
    </subcellularLocation>
    <subcellularLocation>
        <location evidence="4">Cytoplasmic granule</location>
    </subcellularLocation>
    <subcellularLocation>
        <location evidence="4">Cytoplasm</location>
        <location evidence="4">Perinuclear region</location>
    </subcellularLocation>
    <text evidence="4">Localizes to P granules. This association is less apparent during pachytene, becomes obvious in maturing oocytes and is most prominently visible in developing embryos.</text>
</comment>
<comment type="tissue specificity">
    <text evidence="4">Germline-specific.</text>
</comment>
<comment type="developmental stage">
    <text evidence="4">Expressed both maternally and zygotically throughout embryonic development and in adult hermaphrodites.</text>
</comment>
<comment type="domain">
    <text evidence="4">In contrast to other poly(A) RNA polymerases, lacks any RNA-binding domain.</text>
</comment>
<comment type="disruption phenotype">
    <text evidence="4">High embryonic lethality. Hermaphrodite animals are partially fertile and those that produce sperm and oocytes have reduced brood sizes and display smaller germlines. Hermaphrodite gld-4 and gld-2 double mutants are fully sterile and display either an earlier meiotic arrest than gld-2 single mutant or a failure to commit to meiotic progression and a return to mitosis.</text>
</comment>
<comment type="miscellaneous">
    <text evidence="4">The gld-4 locus produces a single transcript that is SL-1 trans-spliced.</text>
</comment>
<evidence type="ECO:0000250" key="1">
    <source>
        <dbReference type="UniProtKB" id="O17087"/>
    </source>
</evidence>
<evidence type="ECO:0000255" key="2"/>
<evidence type="ECO:0000256" key="3">
    <source>
        <dbReference type="SAM" id="MobiDB-lite"/>
    </source>
</evidence>
<evidence type="ECO:0000269" key="4">
    <source>
    </source>
</evidence>
<evidence type="ECO:0000303" key="5">
    <source>
    </source>
</evidence>
<evidence type="ECO:0000305" key="6"/>
<evidence type="ECO:0000312" key="7">
    <source>
        <dbReference type="EMBL" id="ACO95123.1"/>
    </source>
</evidence>
<evidence type="ECO:0000312" key="8">
    <source>
        <dbReference type="WormBase" id="ZK858.1"/>
    </source>
</evidence>
<name>GLD4_CAEEL</name>
<sequence length="845" mass="94310">MNEDSRLSSSQQPSTSTPRSSIPSTMNSDEPNTCRRLSQSQEQPSTSRTCKSETPEFGYSDSLPFAPWRRKRYGLNIQGLHEEIVDMYHWIKPNEIESRLRTKVFEKVRDSVLRRWKQKTIKISMFGSLRTNLFLPTSDIDVLVECDDWVGTPGDWLAETARGLEADNIAESVMVYGGAFVPIVKMVDRDTRLSIDISFNTVQGVRAASYIAKVKEEFPLIEPLVLLLKQFLHYRNLNQTFTGGLSSYGLVLLLVNFFQLYALNMRSRTIYDRGVNLGHLLLRFLELYSLEFNFEEMGISPGQCCYIPKSASGARYGHKQAQPGNLALEDPLLTANDVGRSTYNFSSIANAFGQAFQILLVAVTLRERKGKNHVAMRAYKGSLLHLIMPFTSKELTYRNWLMSGVLSMPGQEAPASYDLNQLHNTLVSPMVDLSRYAWLRKAPAKAEKRDSRPLTIVNPADDRQTLAQQLKKQILEQTEAKKSLEKMPACDDNKKEEELVATRETDVELEAEDTESEGHHNGENDLILTGPPLPTSTQSVNTSATVSTAASISEREDTDSPGLSSSMGNQSSEEDEDNGINNRNNSAVPVQFKKPFNEVVAQPARESKRTQTTSEDKMQDQFHFNGYSYPPPSRYAAGTAAPSHKHRNAHPQRQRPSIRNLSQGSDGSDEYNVESWNNNIRQGRRASSNSPSPSRQQTNTRNCGPTNNIPYDSFRSQNKNSTLDGSNNSSEEPITMYADVVKKKSSITTSTNTSTADVNVTNGNPIPANGIIPQSMAVVNVGRGSYRNALTTSPMTPPSAHTSMQKQHHLRKDNECGFDNNSATSSTDLSHHQPQLVPPVNRLQR</sequence>
<feature type="chain" id="PRO_0000419046" description="Poly(A) RNA polymerase gld-4">
    <location>
        <begin position="1"/>
        <end position="845"/>
    </location>
</feature>
<feature type="domain" description="PAP-associated" evidence="2">
    <location>
        <begin position="276"/>
        <end position="335"/>
    </location>
</feature>
<feature type="region of interest" description="Disordered" evidence="3">
    <location>
        <begin position="1"/>
        <end position="55"/>
    </location>
</feature>
<feature type="region of interest" description="Disordered" evidence="3">
    <location>
        <begin position="482"/>
        <end position="733"/>
    </location>
</feature>
<feature type="region of interest" description="Disordered" evidence="3">
    <location>
        <begin position="788"/>
        <end position="845"/>
    </location>
</feature>
<feature type="compositionally biased region" description="Low complexity" evidence="3">
    <location>
        <begin position="7"/>
        <end position="25"/>
    </location>
</feature>
<feature type="compositionally biased region" description="Polar residues" evidence="3">
    <location>
        <begin position="26"/>
        <end position="49"/>
    </location>
</feature>
<feature type="compositionally biased region" description="Basic and acidic residues" evidence="3">
    <location>
        <begin position="482"/>
        <end position="506"/>
    </location>
</feature>
<feature type="compositionally biased region" description="Low complexity" evidence="3">
    <location>
        <begin position="535"/>
        <end position="551"/>
    </location>
</feature>
<feature type="compositionally biased region" description="Polar residues" evidence="3">
    <location>
        <begin position="561"/>
        <end position="571"/>
    </location>
</feature>
<feature type="compositionally biased region" description="Polar residues" evidence="3">
    <location>
        <begin position="579"/>
        <end position="588"/>
    </location>
</feature>
<feature type="compositionally biased region" description="Basic and acidic residues" evidence="3">
    <location>
        <begin position="605"/>
        <end position="620"/>
    </location>
</feature>
<feature type="compositionally biased region" description="Basic residues" evidence="3">
    <location>
        <begin position="643"/>
        <end position="653"/>
    </location>
</feature>
<feature type="compositionally biased region" description="Polar residues" evidence="3">
    <location>
        <begin position="654"/>
        <end position="666"/>
    </location>
</feature>
<feature type="compositionally biased region" description="Polar residues" evidence="3">
    <location>
        <begin position="695"/>
        <end position="732"/>
    </location>
</feature>
<feature type="compositionally biased region" description="Polar residues" evidence="3">
    <location>
        <begin position="788"/>
        <end position="805"/>
    </location>
</feature>
<feature type="compositionally biased region" description="Polar residues" evidence="3">
    <location>
        <begin position="819"/>
        <end position="828"/>
    </location>
</feature>
<feature type="binding site" evidence="1 6">
    <location>
        <position position="139"/>
    </location>
    <ligand>
        <name>Mg(2+)</name>
        <dbReference type="ChEBI" id="CHEBI:18420"/>
        <note>catalytic</note>
    </ligand>
</feature>
<feature type="binding site" evidence="1 6">
    <location>
        <position position="141"/>
    </location>
    <ligand>
        <name>Mg(2+)</name>
        <dbReference type="ChEBI" id="CHEBI:18420"/>
        <note>catalytic</note>
    </ligand>
</feature>
<feature type="mutagenesis site" description="Loss of catalytic activity." evidence="4">
    <original>D</original>
    <variation>A</variation>
    <location>
        <position position="139"/>
    </location>
</feature>
<accession>G5EFL0</accession>
<organism>
    <name type="scientific">Caenorhabditis elegans</name>
    <dbReference type="NCBI Taxonomy" id="6239"/>
    <lineage>
        <taxon>Eukaryota</taxon>
        <taxon>Metazoa</taxon>
        <taxon>Ecdysozoa</taxon>
        <taxon>Nematoda</taxon>
        <taxon>Chromadorea</taxon>
        <taxon>Rhabditida</taxon>
        <taxon>Rhabditina</taxon>
        <taxon>Rhabditomorpha</taxon>
        <taxon>Rhabditoidea</taxon>
        <taxon>Rhabditidae</taxon>
        <taxon>Peloderinae</taxon>
        <taxon>Caenorhabditis</taxon>
    </lineage>
</organism>
<proteinExistence type="evidence at protein level"/>
<protein>
    <recommendedName>
        <fullName evidence="5">Poly(A) RNA polymerase gld-4</fullName>
        <ecNumber evidence="4">2.7.7.19</ecNumber>
    </recommendedName>
    <alternativeName>
        <fullName>Defective in germ line development protein 4</fullName>
    </alternativeName>
    <alternativeName>
        <fullName evidence="5">Germline development defective-4</fullName>
    </alternativeName>
</protein>
<reference evidence="6 7" key="1">
    <citation type="journal article" date="2009" name="Genes Dev.">
        <title>Two conserved regulatory cytoplasmic poly(A) polymerases, GLD-4 and GLD-2, regulate meiotic progression in C. elegans.</title>
        <authorList>
            <person name="Schmid M."/>
            <person name="Kuchler B."/>
            <person name="Eckmann C.R."/>
        </authorList>
    </citation>
    <scope>NUCLEOTIDE SEQUENCE [MRNA]</scope>
    <scope>FUNCTION</scope>
    <scope>CATALYTIC ACTIVITY</scope>
    <scope>INTERACTION WITH GLS-1</scope>
    <scope>SUBCELLULAR LOCATION</scope>
    <scope>TISSUE SPECIFICITY</scope>
    <scope>DEVELOPMENTAL STAGE</scope>
    <scope>DISRUPTION PHENOTYPE</scope>
    <scope>MUTAGENESIS OF ASP-139</scope>
</reference>
<reference key="2">
    <citation type="journal article" date="1998" name="Science">
        <title>Genome sequence of the nematode C. elegans: a platform for investigating biology.</title>
        <authorList>
            <consortium name="The C. elegans sequencing consortium"/>
        </authorList>
    </citation>
    <scope>NUCLEOTIDE SEQUENCE [LARGE SCALE GENOMIC DNA]</scope>
    <source>
        <strain>Bristol N2</strain>
    </source>
</reference>
<gene>
    <name evidence="8" type="primary">gld-4</name>
    <name type="ORF">ZK858.1</name>
</gene>